<keyword id="KW-0027">Amidation</keyword>
<keyword id="KW-0903">Direct protein sequencing</keyword>
<keyword id="KW-0527">Neuropeptide</keyword>
<keyword id="KW-0964">Secreted</keyword>
<name>PVK2_EUBPO</name>
<sequence length="11" mass="1103">GSSGLISMPRV</sequence>
<comment type="function">
    <text evidence="4">Mediates visceral muscle contractile activity (myotropic activity).</text>
</comment>
<comment type="subcellular location">
    <subcellularLocation>
        <location evidence="4">Secreted</location>
    </subcellularLocation>
</comment>
<comment type="similarity">
    <text evidence="1">Belongs to the periviscerokinin family.</text>
</comment>
<accession>P85621</accession>
<reference evidence="4" key="1">
    <citation type="journal article" date="2009" name="BMC Evol. Biol.">
        <title>A proteomic approach for studying insect phylogeny: CAPA peptides of ancient insect taxa (Dictyoptera, Blattoptera) as a test case.</title>
        <authorList>
            <person name="Roth S."/>
            <person name="Fromm B."/>
            <person name="Gaede G."/>
            <person name="Predel R."/>
        </authorList>
    </citation>
    <scope>PROTEIN SEQUENCE</scope>
    <scope>AMIDATION AT VAL-11</scope>
    <source>
        <tissue evidence="2">Abdominal perisympathetic organs</tissue>
    </source>
</reference>
<feature type="peptide" id="PRO_0000378788" description="Periviscerokinin-2" evidence="2">
    <location>
        <begin position="1"/>
        <end position="11"/>
    </location>
</feature>
<feature type="modified residue" description="Valine amide" evidence="2">
    <location>
        <position position="11"/>
    </location>
</feature>
<organism>
    <name type="scientific">Eublaberus posticus</name>
    <name type="common">Golden cockroach</name>
    <dbReference type="NCBI Taxonomy" id="36951"/>
    <lineage>
        <taxon>Eukaryota</taxon>
        <taxon>Metazoa</taxon>
        <taxon>Ecdysozoa</taxon>
        <taxon>Arthropoda</taxon>
        <taxon>Hexapoda</taxon>
        <taxon>Insecta</taxon>
        <taxon>Pterygota</taxon>
        <taxon>Neoptera</taxon>
        <taxon>Polyneoptera</taxon>
        <taxon>Dictyoptera</taxon>
        <taxon>Blattodea</taxon>
        <taxon>Blaberoidea</taxon>
        <taxon>Blaberidae</taxon>
        <taxon>Blaberinae</taxon>
        <taxon>Eublaberus</taxon>
    </lineage>
</organism>
<evidence type="ECO:0000255" key="1"/>
<evidence type="ECO:0000269" key="2">
    <source>
    </source>
</evidence>
<evidence type="ECO:0000303" key="3">
    <source>
    </source>
</evidence>
<evidence type="ECO:0000305" key="4"/>
<protein>
    <recommendedName>
        <fullName evidence="3">Periviscerokinin-2</fullName>
        <shortName evidence="3">EubPo-PVK-2</shortName>
    </recommendedName>
</protein>
<proteinExistence type="evidence at protein level"/>
<dbReference type="GO" id="GO:0005576">
    <property type="term" value="C:extracellular region"/>
    <property type="evidence" value="ECO:0007669"/>
    <property type="project" value="UniProtKB-SubCell"/>
</dbReference>
<dbReference type="GO" id="GO:0007218">
    <property type="term" value="P:neuropeptide signaling pathway"/>
    <property type="evidence" value="ECO:0007669"/>
    <property type="project" value="UniProtKB-KW"/>
</dbReference>
<dbReference type="InterPro" id="IPR013231">
    <property type="entry name" value="Periviscerokinin"/>
</dbReference>
<dbReference type="Pfam" id="PF08259">
    <property type="entry name" value="Periviscerokin"/>
    <property type="match status" value="1"/>
</dbReference>